<proteinExistence type="evidence at transcript level"/>
<name>BHE41_RAT</name>
<gene>
    <name type="primary">Bhlhb3</name>
    <name type="synonym">Sharp1</name>
</gene>
<dbReference type="EMBL" id="AF009329">
    <property type="protein sequence ID" value="AAB63586.1"/>
    <property type="status" value="ALT_FRAME"/>
    <property type="molecule type" value="mRNA"/>
</dbReference>
<dbReference type="SMR" id="O35779"/>
<dbReference type="FunCoup" id="O35779">
    <property type="interactions" value="211"/>
</dbReference>
<dbReference type="STRING" id="10116.ENSRNOP00000064008"/>
<dbReference type="GlyGen" id="O35779">
    <property type="glycosylation" value="1 site"/>
</dbReference>
<dbReference type="PhosphoSitePlus" id="O35779"/>
<dbReference type="AGR" id="RGD:70900"/>
<dbReference type="RGD" id="70900">
    <property type="gene designation" value="Bhlhb3"/>
</dbReference>
<dbReference type="InParanoid" id="O35779"/>
<dbReference type="PhylomeDB" id="O35779"/>
<dbReference type="PRO" id="PR:O35779"/>
<dbReference type="Proteomes" id="UP000002494">
    <property type="component" value="Unplaced"/>
</dbReference>
<dbReference type="GO" id="GO:0005634">
    <property type="term" value="C:nucleus"/>
    <property type="evidence" value="ECO:0000318"/>
    <property type="project" value="GO_Central"/>
</dbReference>
<dbReference type="GO" id="GO:0043425">
    <property type="term" value="F:bHLH transcription factor binding"/>
    <property type="evidence" value="ECO:0000266"/>
    <property type="project" value="RGD"/>
</dbReference>
<dbReference type="GO" id="GO:0000981">
    <property type="term" value="F:DNA-binding transcription factor activity, RNA polymerase II-specific"/>
    <property type="evidence" value="ECO:0000266"/>
    <property type="project" value="RGD"/>
</dbReference>
<dbReference type="GO" id="GO:0001227">
    <property type="term" value="F:DNA-binding transcription repressor activity, RNA polymerase II-specific"/>
    <property type="evidence" value="ECO:0000250"/>
    <property type="project" value="UniProtKB"/>
</dbReference>
<dbReference type="GO" id="GO:0070888">
    <property type="term" value="F:E-box binding"/>
    <property type="evidence" value="ECO:0000266"/>
    <property type="project" value="RGD"/>
</dbReference>
<dbReference type="GO" id="GO:0042826">
    <property type="term" value="F:histone deacetylase binding"/>
    <property type="evidence" value="ECO:0000266"/>
    <property type="project" value="RGD"/>
</dbReference>
<dbReference type="GO" id="GO:0043426">
    <property type="term" value="F:MRF binding"/>
    <property type="evidence" value="ECO:0000266"/>
    <property type="project" value="RGD"/>
</dbReference>
<dbReference type="GO" id="GO:0046982">
    <property type="term" value="F:protein heterodimerization activity"/>
    <property type="evidence" value="ECO:0000266"/>
    <property type="project" value="RGD"/>
</dbReference>
<dbReference type="GO" id="GO:0042803">
    <property type="term" value="F:protein homodimerization activity"/>
    <property type="evidence" value="ECO:0000266"/>
    <property type="project" value="RGD"/>
</dbReference>
<dbReference type="GO" id="GO:0000978">
    <property type="term" value="F:RNA polymerase II cis-regulatory region sequence-specific DNA binding"/>
    <property type="evidence" value="ECO:0000266"/>
    <property type="project" value="RGD"/>
</dbReference>
<dbReference type="GO" id="GO:0061629">
    <property type="term" value="F:RNA polymerase II-specific DNA-binding transcription factor binding"/>
    <property type="evidence" value="ECO:0000266"/>
    <property type="project" value="RGD"/>
</dbReference>
<dbReference type="GO" id="GO:1990837">
    <property type="term" value="F:sequence-specific double-stranded DNA binding"/>
    <property type="evidence" value="ECO:0000266"/>
    <property type="project" value="RGD"/>
</dbReference>
<dbReference type="GO" id="GO:0032922">
    <property type="term" value="P:circadian regulation of gene expression"/>
    <property type="evidence" value="ECO:0000266"/>
    <property type="project" value="RGD"/>
</dbReference>
<dbReference type="GO" id="GO:0007623">
    <property type="term" value="P:circadian rhythm"/>
    <property type="evidence" value="ECO:0000270"/>
    <property type="project" value="UniProtKB"/>
</dbReference>
<dbReference type="GO" id="GO:0045892">
    <property type="term" value="P:negative regulation of DNA-templated transcription"/>
    <property type="evidence" value="ECO:0000250"/>
    <property type="project" value="UniProtKB"/>
</dbReference>
<dbReference type="GO" id="GO:0010832">
    <property type="term" value="P:negative regulation of myotube differentiation"/>
    <property type="evidence" value="ECO:0000266"/>
    <property type="project" value="RGD"/>
</dbReference>
<dbReference type="GO" id="GO:0010944">
    <property type="term" value="P:negative regulation of transcription by competitive promoter binding"/>
    <property type="evidence" value="ECO:0000266"/>
    <property type="project" value="RGD"/>
</dbReference>
<dbReference type="GO" id="GO:0000122">
    <property type="term" value="P:negative regulation of transcription by RNA polymerase II"/>
    <property type="evidence" value="ECO:0000266"/>
    <property type="project" value="RGD"/>
</dbReference>
<dbReference type="GO" id="GO:0007399">
    <property type="term" value="P:nervous system development"/>
    <property type="evidence" value="ECO:0000303"/>
    <property type="project" value="RGD"/>
</dbReference>
<dbReference type="GO" id="GO:0050767">
    <property type="term" value="P:regulation of neurogenesis"/>
    <property type="evidence" value="ECO:0000318"/>
    <property type="project" value="GO_Central"/>
</dbReference>
<dbReference type="GO" id="GO:0048168">
    <property type="term" value="P:regulation of neuronal synaptic plasticity"/>
    <property type="evidence" value="ECO:0000270"/>
    <property type="project" value="RGD"/>
</dbReference>
<dbReference type="CDD" id="cd19750">
    <property type="entry name" value="bHLH-O_DEC2"/>
    <property type="match status" value="1"/>
</dbReference>
<dbReference type="FunFam" id="4.10.280.10:FF:000020">
    <property type="entry name" value="class E basic helix-loop-helix protein 40"/>
    <property type="match status" value="1"/>
</dbReference>
<dbReference type="Gene3D" id="6.10.250.980">
    <property type="match status" value="1"/>
</dbReference>
<dbReference type="Gene3D" id="4.10.280.10">
    <property type="entry name" value="Helix-loop-helix DNA-binding domain"/>
    <property type="match status" value="1"/>
</dbReference>
<dbReference type="InterPro" id="IPR011598">
    <property type="entry name" value="bHLH_dom"/>
</dbReference>
<dbReference type="InterPro" id="IPR050370">
    <property type="entry name" value="HES_HEY"/>
</dbReference>
<dbReference type="InterPro" id="IPR036638">
    <property type="entry name" value="HLH_DNA-bd_sf"/>
</dbReference>
<dbReference type="InterPro" id="IPR003650">
    <property type="entry name" value="Orange_dom"/>
</dbReference>
<dbReference type="PANTHER" id="PTHR10985">
    <property type="entry name" value="BASIC HELIX-LOOP-HELIX TRANSCRIPTION FACTOR, HES-RELATED"/>
    <property type="match status" value="1"/>
</dbReference>
<dbReference type="Pfam" id="PF07527">
    <property type="entry name" value="Hairy_orange"/>
    <property type="match status" value="1"/>
</dbReference>
<dbReference type="Pfam" id="PF00010">
    <property type="entry name" value="HLH"/>
    <property type="match status" value="1"/>
</dbReference>
<dbReference type="SMART" id="SM00353">
    <property type="entry name" value="HLH"/>
    <property type="match status" value="1"/>
</dbReference>
<dbReference type="SMART" id="SM00511">
    <property type="entry name" value="ORANGE"/>
    <property type="match status" value="1"/>
</dbReference>
<dbReference type="SUPFAM" id="SSF47459">
    <property type="entry name" value="HLH, helix-loop-helix DNA-binding domain"/>
    <property type="match status" value="1"/>
</dbReference>
<dbReference type="SUPFAM" id="SSF158457">
    <property type="entry name" value="Orange domain-like"/>
    <property type="match status" value="1"/>
</dbReference>
<dbReference type="PROSITE" id="PS50888">
    <property type="entry name" value="BHLH"/>
    <property type="match status" value="1"/>
</dbReference>
<dbReference type="PROSITE" id="PS51054">
    <property type="entry name" value="ORANGE"/>
    <property type="match status" value="1"/>
</dbReference>
<comment type="function">
    <text evidence="1">Transcriptional repressor involved in the regulation of the circadian rhythm by negatively regulating the activity of the clock genes and clock-controlled genes. Acts as the negative limb of a novel autoregulatory feedback loop (DEC loop) which differs from the one formed by the PER and CRY transcriptional repressors (PER/CRY loop). Both these loops are interlocked as it represses the expression of PER1 and in turn is repressed by PER1/2 and CRY1/2. Represses the activity of the circadian transcriptional activator: CLOCK-BMAL1 heterodimer by competing for the binding to E-box elements (5'-CACGTG-3') found within the promoters of its target genes. Negatively regulates its own expression and the expression of DBP and BHLHE41/DEC2. Acts as a corepressor of RXR and the RXR-LXR heterodimers and represses the ligand-induced RXRA/B/G, NR1H3/LXRA, NR1H4 and VDR transactivation activity (By similarity). Inhibits HNF1A-mediated transactivation of CYP1A2, CYP2E1 and CYP3A11 (By similarity).</text>
</comment>
<comment type="subunit">
    <text evidence="1 2">Homodimer (By similarity). Heterodimer with BHLHE40/DEC1 (By similarity). Interacts with CIART (By similarity). Interacts with BMAL1 and RXRA (By similarity). Interacts with NR0B2 and HNF1A (By similarity).</text>
</comment>
<comment type="subcellular location">
    <subcellularLocation>
        <location evidence="3 4">Nucleus</location>
    </subcellularLocation>
</comment>
<comment type="tissue specificity">
    <text evidence="6">Highly expressed in the caudate putamen, pineal gland, granular cell layer of the cerebellum, olfactory bulb, piriform cortex, hippocampus and hypothalamic nuclei. Moderately expressed in skeletal muscle, heart. Weakly expressed in lung.</text>
</comment>
<comment type="induction">
    <text evidence="6">Expressed in a circadian manner in the suprachiasmatic nucleus (SCN) of the brain.</text>
</comment>
<comment type="sequence caution" evidence="7">
    <conflict type="frameshift">
        <sequence resource="EMBL-CDS" id="AAB63586"/>
    </conflict>
</comment>
<accession>O35779</accession>
<reference key="1">
    <citation type="journal article" date="1997" name="Mol. Cell. Neurosci.">
        <title>SHARPs: mammalian enhancer-of-split- and hairy-related proteins coupled to neuronal stimulation.</title>
        <authorList>
            <person name="Rossner M.J."/>
            <person name="Doerr J."/>
            <person name="Gass P."/>
            <person name="Schwab M.H."/>
            <person name="Nave K.-A."/>
        </authorList>
    </citation>
    <scope>NUCLEOTIDE SEQUENCE [MRNA]</scope>
    <source>
        <strain>Sprague-Dawley</strain>
        <tissue>Cerebellum</tissue>
    </source>
</reference>
<reference key="2">
    <citation type="journal article" date="2002" name="Nature">
        <title>Dec1 and Dec2 are regulators of the mammalian molecular clock.</title>
        <authorList>
            <person name="Honma S."/>
            <person name="Kawamoto T."/>
            <person name="Takagi Y."/>
            <person name="Fujimoto K."/>
            <person name="Sato F."/>
            <person name="Noshiro M."/>
            <person name="Kato Y."/>
            <person name="Honma K.I."/>
        </authorList>
    </citation>
    <scope>INDUCTION</scope>
    <scope>TISSUE SPECIFICITY</scope>
</reference>
<keyword id="KW-0090">Biological rhythms</keyword>
<keyword id="KW-0238">DNA-binding</keyword>
<keyword id="KW-1017">Isopeptide bond</keyword>
<keyword id="KW-0539">Nucleus</keyword>
<keyword id="KW-1185">Reference proteome</keyword>
<keyword id="KW-0678">Repressor</keyword>
<keyword id="KW-0804">Transcription</keyword>
<keyword id="KW-0805">Transcription regulation</keyword>
<keyword id="KW-0832">Ubl conjugation</keyword>
<sequence>MDEGIPHLQERQLLEHRDFIGLDYSSLYMCKPKRSLKRDDTKDTYKLPHRLIEKKRRDRINECIAQLKDLLPEHLKLTTLGHLEKAVVLELTLKHLKALTALTEQQHQKIIALQNGERSLKSPVQADLDAFHSGFQTCAKEVLQYLARFESWTPREPRCAQLVSHLHAVATQLLTPQVTPGRGPGRAPCSAGAAAASGSERVARCVPVIQRTQPGTEPEHDTDTDSGYGGEAEQGRAAVKQEPPGDPSAAPKRLKLEARGALLGPEPALLGSLVALGGGAPFAQPAAAPFCLPFYLLSPSAAAYVQPWLDKSGLDKYLYPAAAAPFPLLYPGIPAAAAAAAAAAFPCLSSVLSPPPEKAGSAAGAPFLAHEVAPPGSLRPQHAHSRTHLPHAVNPESSQEDATQPAKDAP</sequence>
<organism>
    <name type="scientific">Rattus norvegicus</name>
    <name type="common">Rat</name>
    <dbReference type="NCBI Taxonomy" id="10116"/>
    <lineage>
        <taxon>Eukaryota</taxon>
        <taxon>Metazoa</taxon>
        <taxon>Chordata</taxon>
        <taxon>Craniata</taxon>
        <taxon>Vertebrata</taxon>
        <taxon>Euteleostomi</taxon>
        <taxon>Mammalia</taxon>
        <taxon>Eutheria</taxon>
        <taxon>Euarchontoglires</taxon>
        <taxon>Glires</taxon>
        <taxon>Rodentia</taxon>
        <taxon>Myomorpha</taxon>
        <taxon>Muroidea</taxon>
        <taxon>Muridae</taxon>
        <taxon>Murinae</taxon>
        <taxon>Rattus</taxon>
    </lineage>
</organism>
<evidence type="ECO:0000250" key="1">
    <source>
        <dbReference type="UniProtKB" id="Q99PV5"/>
    </source>
</evidence>
<evidence type="ECO:0000250" key="2">
    <source>
        <dbReference type="UniProtKB" id="Q9C0J9"/>
    </source>
</evidence>
<evidence type="ECO:0000255" key="3">
    <source>
        <dbReference type="PROSITE-ProRule" id="PRU00380"/>
    </source>
</evidence>
<evidence type="ECO:0000255" key="4">
    <source>
        <dbReference type="PROSITE-ProRule" id="PRU00981"/>
    </source>
</evidence>
<evidence type="ECO:0000256" key="5">
    <source>
        <dbReference type="SAM" id="MobiDB-lite"/>
    </source>
</evidence>
<evidence type="ECO:0000269" key="6">
    <source>
    </source>
</evidence>
<evidence type="ECO:0000305" key="7"/>
<protein>
    <recommendedName>
        <fullName>Class E basic helix-loop-helix protein 41</fullName>
        <shortName>bHLHe41</shortName>
    </recommendedName>
    <alternativeName>
        <fullName>Class B basic helix-loop-helix protein 3</fullName>
        <shortName>bHLHb3</shortName>
    </alternativeName>
    <alternativeName>
        <fullName>Enhancer-of-split and hairy-related protein 1</fullName>
        <shortName>SHARP-1</shortName>
    </alternativeName>
</protein>
<feature type="chain" id="PRO_0000127149" description="Class E basic helix-loop-helix protein 41">
    <location>
        <begin position="1"/>
        <end position="410"/>
    </location>
</feature>
<feature type="domain" description="bHLH" evidence="4">
    <location>
        <begin position="44"/>
        <end position="99"/>
    </location>
</feature>
<feature type="domain" description="Orange" evidence="3">
    <location>
        <begin position="131"/>
        <end position="166"/>
    </location>
</feature>
<feature type="region of interest" description="Disordered" evidence="5">
    <location>
        <begin position="209"/>
        <end position="251"/>
    </location>
</feature>
<feature type="region of interest" description="Disordered" evidence="5">
    <location>
        <begin position="371"/>
        <end position="410"/>
    </location>
</feature>
<feature type="cross-link" description="Glycyl lysine isopeptide (Lys-Gly) (interchain with G-Cter in SUMO2)" evidence="2">
    <location>
        <position position="31"/>
    </location>
</feature>
<feature type="cross-link" description="Glycyl lysine isopeptide (Lys-Gly) (interchain with G-Cter in SUMO2)" evidence="2">
    <location>
        <position position="121"/>
    </location>
</feature>
<feature type="cross-link" description="Glycyl lysine isopeptide (Lys-Gly) (interchain with G-Cter in SUMO2)" evidence="2">
    <location>
        <position position="240"/>
    </location>
</feature>